<organism>
    <name type="scientific">Escherichia coli O81 (strain ED1a)</name>
    <dbReference type="NCBI Taxonomy" id="585397"/>
    <lineage>
        <taxon>Bacteria</taxon>
        <taxon>Pseudomonadati</taxon>
        <taxon>Pseudomonadota</taxon>
        <taxon>Gammaproteobacteria</taxon>
        <taxon>Enterobacterales</taxon>
        <taxon>Enterobacteriaceae</taxon>
        <taxon>Escherichia</taxon>
    </lineage>
</organism>
<keyword id="KW-0143">Chaperone</keyword>
<keyword id="KW-0963">Cytoplasm</keyword>
<comment type="function">
    <text evidence="1">Involved in the biogenesis of TorA. Acts on TorA before the insertion of the molybdenum cofactor and, as a result, probably favors a conformation of the apoenzyme that is competent for acquiring the cofactor.</text>
</comment>
<comment type="subcellular location">
    <subcellularLocation>
        <location evidence="1">Cytoplasm</location>
    </subcellularLocation>
</comment>
<comment type="similarity">
    <text evidence="1">Belongs to the TorD/DmsD family. TorD subfamily.</text>
</comment>
<gene>
    <name evidence="1" type="primary">torD</name>
    <name type="ordered locus">ECED1_1075</name>
</gene>
<proteinExistence type="inferred from homology"/>
<protein>
    <recommendedName>
        <fullName evidence="1">Chaperone protein TorD</fullName>
    </recommendedName>
</protein>
<dbReference type="EMBL" id="CU928162">
    <property type="protein sequence ID" value="CAR07276.1"/>
    <property type="molecule type" value="Genomic_DNA"/>
</dbReference>
<dbReference type="RefSeq" id="WP_000209906.1">
    <property type="nucleotide sequence ID" value="NC_011745.1"/>
</dbReference>
<dbReference type="SMR" id="B7MPT0"/>
<dbReference type="KEGG" id="ecq:ECED1_1075"/>
<dbReference type="HOGENOM" id="CLU_077650_4_0_6"/>
<dbReference type="Proteomes" id="UP000000748">
    <property type="component" value="Chromosome"/>
</dbReference>
<dbReference type="GO" id="GO:0005737">
    <property type="term" value="C:cytoplasm"/>
    <property type="evidence" value="ECO:0007669"/>
    <property type="project" value="UniProtKB-SubCell"/>
</dbReference>
<dbReference type="GO" id="GO:0051259">
    <property type="term" value="P:protein complex oligomerization"/>
    <property type="evidence" value="ECO:0007669"/>
    <property type="project" value="InterPro"/>
</dbReference>
<dbReference type="GO" id="GO:0006457">
    <property type="term" value="P:protein folding"/>
    <property type="evidence" value="ECO:0007669"/>
    <property type="project" value="UniProtKB-UniRule"/>
</dbReference>
<dbReference type="FunFam" id="1.20.120.1820:FF:000001">
    <property type="entry name" value="Chaperone protein TorD"/>
    <property type="match status" value="1"/>
</dbReference>
<dbReference type="Gene3D" id="1.20.120.1820">
    <property type="match status" value="1"/>
</dbReference>
<dbReference type="Gene3D" id="1.20.1280.20">
    <property type="entry name" value="HscB, C-terminal domain"/>
    <property type="match status" value="1"/>
</dbReference>
<dbReference type="HAMAP" id="MF_01150">
    <property type="entry name" value="TorD"/>
    <property type="match status" value="1"/>
</dbReference>
<dbReference type="InterPro" id="IPR023069">
    <property type="entry name" value="Chaperone_TorD"/>
</dbReference>
<dbReference type="InterPro" id="IPR020945">
    <property type="entry name" value="DMSO/NO3_reduct_chaperone"/>
</dbReference>
<dbReference type="InterPro" id="IPR036386">
    <property type="entry name" value="HscB_C_sf"/>
</dbReference>
<dbReference type="InterPro" id="IPR036411">
    <property type="entry name" value="TorD-like_sf"/>
</dbReference>
<dbReference type="InterPro" id="IPR050289">
    <property type="entry name" value="TorD/DmsD_chaperones"/>
</dbReference>
<dbReference type="NCBIfam" id="NF003442">
    <property type="entry name" value="PRK04976.1"/>
    <property type="match status" value="1"/>
</dbReference>
<dbReference type="PANTHER" id="PTHR34227:SF11">
    <property type="entry name" value="CHAPERONE PROTEIN TORD"/>
    <property type="match status" value="1"/>
</dbReference>
<dbReference type="PANTHER" id="PTHR34227">
    <property type="entry name" value="CHAPERONE PROTEIN YCDY"/>
    <property type="match status" value="1"/>
</dbReference>
<dbReference type="Pfam" id="PF02613">
    <property type="entry name" value="Nitrate_red_del"/>
    <property type="match status" value="1"/>
</dbReference>
<dbReference type="SUPFAM" id="SSF89155">
    <property type="entry name" value="TorD-like"/>
    <property type="match status" value="1"/>
</dbReference>
<accession>B7MPT0</accession>
<evidence type="ECO:0000255" key="1">
    <source>
        <dbReference type="HAMAP-Rule" id="MF_01150"/>
    </source>
</evidence>
<name>TORD_ECO81</name>
<sequence>MTTLTAQQIACVYAWLAQLFSRELDDEQLTQIASAQMAEWFSLLKSEPPLTAAVNGLENSIATLTVRDDARLELAADFCGLFLMTDKQAALPYASAYKQDEQEIKRLLVEAGMETSGNFNEPADHLAIYLELLSHLHFSLGEGTVPARRIDGLRQKTLTALRQWLPEFVARCHQYDRFGFYAALSQLLQVLVECDNQKG</sequence>
<feature type="chain" id="PRO_1000164169" description="Chaperone protein TorD">
    <location>
        <begin position="1"/>
        <end position="199"/>
    </location>
</feature>
<reference key="1">
    <citation type="journal article" date="2009" name="PLoS Genet.">
        <title>Organised genome dynamics in the Escherichia coli species results in highly diverse adaptive paths.</title>
        <authorList>
            <person name="Touchon M."/>
            <person name="Hoede C."/>
            <person name="Tenaillon O."/>
            <person name="Barbe V."/>
            <person name="Baeriswyl S."/>
            <person name="Bidet P."/>
            <person name="Bingen E."/>
            <person name="Bonacorsi S."/>
            <person name="Bouchier C."/>
            <person name="Bouvet O."/>
            <person name="Calteau A."/>
            <person name="Chiapello H."/>
            <person name="Clermont O."/>
            <person name="Cruveiller S."/>
            <person name="Danchin A."/>
            <person name="Diard M."/>
            <person name="Dossat C."/>
            <person name="Karoui M.E."/>
            <person name="Frapy E."/>
            <person name="Garry L."/>
            <person name="Ghigo J.M."/>
            <person name="Gilles A.M."/>
            <person name="Johnson J."/>
            <person name="Le Bouguenec C."/>
            <person name="Lescat M."/>
            <person name="Mangenot S."/>
            <person name="Martinez-Jehanne V."/>
            <person name="Matic I."/>
            <person name="Nassif X."/>
            <person name="Oztas S."/>
            <person name="Petit M.A."/>
            <person name="Pichon C."/>
            <person name="Rouy Z."/>
            <person name="Ruf C.S."/>
            <person name="Schneider D."/>
            <person name="Tourret J."/>
            <person name="Vacherie B."/>
            <person name="Vallenet D."/>
            <person name="Medigue C."/>
            <person name="Rocha E.P.C."/>
            <person name="Denamur E."/>
        </authorList>
    </citation>
    <scope>NUCLEOTIDE SEQUENCE [LARGE SCALE GENOMIC DNA]</scope>
    <source>
        <strain>ED1a</strain>
    </source>
</reference>